<accession>B1KIS4</accession>
<comment type="function">
    <text evidence="2">Transaldolase is important for the balance of metabolites in the pentose-phosphate pathway.</text>
</comment>
<comment type="catalytic activity">
    <reaction evidence="2">
        <text>D-sedoheptulose 7-phosphate + D-glyceraldehyde 3-phosphate = D-erythrose 4-phosphate + beta-D-fructose 6-phosphate</text>
        <dbReference type="Rhea" id="RHEA:17053"/>
        <dbReference type="ChEBI" id="CHEBI:16897"/>
        <dbReference type="ChEBI" id="CHEBI:57483"/>
        <dbReference type="ChEBI" id="CHEBI:57634"/>
        <dbReference type="ChEBI" id="CHEBI:59776"/>
        <dbReference type="EC" id="2.2.1.2"/>
    </reaction>
</comment>
<comment type="pathway">
    <text evidence="2">Carbohydrate degradation; pentose phosphate pathway; D-glyceraldehyde 3-phosphate and beta-D-fructose 6-phosphate from D-ribose 5-phosphate and D-xylulose 5-phosphate (non-oxidative stage): step 2/3.</text>
</comment>
<comment type="subunit">
    <text evidence="1">Homodimer.</text>
</comment>
<comment type="subcellular location">
    <subcellularLocation>
        <location evidence="2">Cytoplasm</location>
    </subcellularLocation>
</comment>
<comment type="similarity">
    <text evidence="2">Belongs to the transaldolase family. Type 1 subfamily.</text>
</comment>
<organism>
    <name type="scientific">Shewanella woodyi (strain ATCC 51908 / MS32)</name>
    <dbReference type="NCBI Taxonomy" id="392500"/>
    <lineage>
        <taxon>Bacteria</taxon>
        <taxon>Pseudomonadati</taxon>
        <taxon>Pseudomonadota</taxon>
        <taxon>Gammaproteobacteria</taxon>
        <taxon>Alteromonadales</taxon>
        <taxon>Shewanellaceae</taxon>
        <taxon>Shewanella</taxon>
    </lineage>
</organism>
<evidence type="ECO:0000250" key="1"/>
<evidence type="ECO:0000255" key="2">
    <source>
        <dbReference type="HAMAP-Rule" id="MF_00492"/>
    </source>
</evidence>
<gene>
    <name evidence="2" type="primary">tal</name>
    <name type="ordered locus">Swoo_1280</name>
</gene>
<protein>
    <recommendedName>
        <fullName evidence="2">Transaldolase</fullName>
        <ecNumber evidence="2">2.2.1.2</ecNumber>
    </recommendedName>
</protein>
<feature type="chain" id="PRO_1000126257" description="Transaldolase">
    <location>
        <begin position="1"/>
        <end position="318"/>
    </location>
</feature>
<feature type="active site" description="Schiff-base intermediate with substrate" evidence="2">
    <location>
        <position position="132"/>
    </location>
</feature>
<dbReference type="EC" id="2.2.1.2" evidence="2"/>
<dbReference type="EMBL" id="CP000961">
    <property type="protein sequence ID" value="ACA85572.1"/>
    <property type="molecule type" value="Genomic_DNA"/>
</dbReference>
<dbReference type="RefSeq" id="WP_012323918.1">
    <property type="nucleotide sequence ID" value="NC_010506.1"/>
</dbReference>
<dbReference type="SMR" id="B1KIS4"/>
<dbReference type="STRING" id="392500.Swoo_1280"/>
<dbReference type="KEGG" id="swd:Swoo_1280"/>
<dbReference type="eggNOG" id="COG0176">
    <property type="taxonomic scope" value="Bacteria"/>
</dbReference>
<dbReference type="HOGENOM" id="CLU_047470_0_1_6"/>
<dbReference type="UniPathway" id="UPA00115">
    <property type="reaction ID" value="UER00414"/>
</dbReference>
<dbReference type="Proteomes" id="UP000002168">
    <property type="component" value="Chromosome"/>
</dbReference>
<dbReference type="GO" id="GO:0005829">
    <property type="term" value="C:cytosol"/>
    <property type="evidence" value="ECO:0007669"/>
    <property type="project" value="TreeGrafter"/>
</dbReference>
<dbReference type="GO" id="GO:0004801">
    <property type="term" value="F:transaldolase activity"/>
    <property type="evidence" value="ECO:0000250"/>
    <property type="project" value="UniProtKB"/>
</dbReference>
<dbReference type="GO" id="GO:0005975">
    <property type="term" value="P:carbohydrate metabolic process"/>
    <property type="evidence" value="ECO:0007669"/>
    <property type="project" value="InterPro"/>
</dbReference>
<dbReference type="GO" id="GO:0006098">
    <property type="term" value="P:pentose-phosphate shunt"/>
    <property type="evidence" value="ECO:0007669"/>
    <property type="project" value="UniProtKB-UniRule"/>
</dbReference>
<dbReference type="CDD" id="cd00957">
    <property type="entry name" value="Transaldolase_TalAB"/>
    <property type="match status" value="1"/>
</dbReference>
<dbReference type="FunFam" id="3.20.20.70:FF:000002">
    <property type="entry name" value="Transaldolase"/>
    <property type="match status" value="1"/>
</dbReference>
<dbReference type="Gene3D" id="3.20.20.70">
    <property type="entry name" value="Aldolase class I"/>
    <property type="match status" value="1"/>
</dbReference>
<dbReference type="HAMAP" id="MF_00492">
    <property type="entry name" value="Transaldolase_1"/>
    <property type="match status" value="1"/>
</dbReference>
<dbReference type="InterPro" id="IPR013785">
    <property type="entry name" value="Aldolase_TIM"/>
</dbReference>
<dbReference type="InterPro" id="IPR001585">
    <property type="entry name" value="TAL/FSA"/>
</dbReference>
<dbReference type="InterPro" id="IPR004730">
    <property type="entry name" value="Transaldolase_1"/>
</dbReference>
<dbReference type="InterPro" id="IPR018225">
    <property type="entry name" value="Transaldolase_AS"/>
</dbReference>
<dbReference type="NCBIfam" id="NF009001">
    <property type="entry name" value="PRK12346.1"/>
    <property type="match status" value="1"/>
</dbReference>
<dbReference type="NCBIfam" id="TIGR00874">
    <property type="entry name" value="talAB"/>
    <property type="match status" value="1"/>
</dbReference>
<dbReference type="PANTHER" id="PTHR10683">
    <property type="entry name" value="TRANSALDOLASE"/>
    <property type="match status" value="1"/>
</dbReference>
<dbReference type="PANTHER" id="PTHR10683:SF18">
    <property type="entry name" value="TRANSALDOLASE"/>
    <property type="match status" value="1"/>
</dbReference>
<dbReference type="Pfam" id="PF00923">
    <property type="entry name" value="TAL_FSA"/>
    <property type="match status" value="1"/>
</dbReference>
<dbReference type="SUPFAM" id="SSF51569">
    <property type="entry name" value="Aldolase"/>
    <property type="match status" value="1"/>
</dbReference>
<dbReference type="PROSITE" id="PS01054">
    <property type="entry name" value="TRANSALDOLASE_1"/>
    <property type="match status" value="1"/>
</dbReference>
<dbReference type="PROSITE" id="PS00958">
    <property type="entry name" value="TRANSALDOLASE_2"/>
    <property type="match status" value="1"/>
</dbReference>
<reference key="1">
    <citation type="submission" date="2008-02" db="EMBL/GenBank/DDBJ databases">
        <title>Complete sequence of Shewanella woodyi ATCC 51908.</title>
        <authorList>
            <consortium name="US DOE Joint Genome Institute"/>
            <person name="Copeland A."/>
            <person name="Lucas S."/>
            <person name="Lapidus A."/>
            <person name="Glavina del Rio T."/>
            <person name="Dalin E."/>
            <person name="Tice H."/>
            <person name="Bruce D."/>
            <person name="Goodwin L."/>
            <person name="Pitluck S."/>
            <person name="Sims D."/>
            <person name="Brettin T."/>
            <person name="Detter J.C."/>
            <person name="Han C."/>
            <person name="Kuske C.R."/>
            <person name="Schmutz J."/>
            <person name="Larimer F."/>
            <person name="Land M."/>
            <person name="Hauser L."/>
            <person name="Kyrpides N."/>
            <person name="Lykidis A."/>
            <person name="Zhao J.-S."/>
            <person name="Richardson P."/>
        </authorList>
    </citation>
    <scope>NUCLEOTIDE SEQUENCE [LARGE SCALE GENOMIC DNA]</scope>
    <source>
        <strain>ATCC 51908 / MS32</strain>
    </source>
</reference>
<name>TAL_SHEWM</name>
<keyword id="KW-0963">Cytoplasm</keyword>
<keyword id="KW-0570">Pentose shunt</keyword>
<keyword id="KW-1185">Reference proteome</keyword>
<keyword id="KW-0704">Schiff base</keyword>
<keyword id="KW-0808">Transferase</keyword>
<proteinExistence type="inferred from homology"/>
<sequence length="318" mass="35107">MANTLEQFKSITTIVADTGDIEAIKRYQPEDATTNPSLILKAAQIPDYAHLIENAIEWAKTQSSQIDQQVEDAGDKLAVNIGVEILKIVPGRISTEVDARLSFDKAGSIAKAHKLIKLYQEAGIDKSRILIKLASTWEGICAAKELEQEGINCNLTLLFSFAQARACAEAGVYLISPFVGRILDWYKKDTGLEYSATEDPGVVSVTEIYNYYKRHGFNTVVMGASFRNTGEIIELAGCDRLTIGPALLEEMANSQTEVVRKLIPAETTVEAGEPLTEAQFRWEFNENPMAVEKLAEGIRNFAIDQGKLEVMLKEKLTS</sequence>